<gene>
    <name type="primary">rnf146</name>
</gene>
<proteinExistence type="evidence at transcript level"/>
<feature type="chain" id="PRO_0000409508" description="E3 ubiquitin-protein ligase rnf146">
    <location>
        <begin position="1"/>
        <end position="316"/>
    </location>
</feature>
<feature type="domain" description="WWE" evidence="5">
    <location>
        <begin position="91"/>
        <end position="167"/>
    </location>
</feature>
<feature type="zinc finger region" description="RING-type" evidence="4">
    <location>
        <begin position="36"/>
        <end position="74"/>
    </location>
</feature>
<feature type="region of interest" description="Disordered" evidence="6">
    <location>
        <begin position="257"/>
        <end position="316"/>
    </location>
</feature>
<feature type="compositionally biased region" description="Polar residues" evidence="6">
    <location>
        <begin position="293"/>
        <end position="310"/>
    </location>
</feature>
<feature type="binding site" evidence="1">
    <location>
        <position position="107"/>
    </location>
    <ligand>
        <name>a glycoprotein</name>
        <dbReference type="ChEBI" id="CHEBI:17089"/>
    </ligand>
    <ligandPart>
        <name>poly[(1''-&gt;2')-ADP-alpha-D-ribose] group</name>
        <dbReference type="ChEBI" id="CHEBI:157741"/>
    </ligandPart>
</feature>
<feature type="binding site" evidence="1">
    <location>
        <position position="110"/>
    </location>
    <ligand>
        <name>a glycoprotein</name>
        <dbReference type="ChEBI" id="CHEBI:17089"/>
    </ligand>
    <ligandPart>
        <name>poly[(1''-&gt;2')-ADP-alpha-D-ribose] group</name>
        <dbReference type="ChEBI" id="CHEBI:157741"/>
    </ligandPart>
</feature>
<feature type="binding site" evidence="1">
    <location>
        <position position="114"/>
    </location>
    <ligand>
        <name>a glycoprotein</name>
        <dbReference type="ChEBI" id="CHEBI:17089"/>
    </ligand>
    <ligandPart>
        <name>poly[(1''-&gt;2')-ADP-alpha-D-ribose] group</name>
        <dbReference type="ChEBI" id="CHEBI:157741"/>
    </ligandPart>
</feature>
<feature type="binding site" evidence="1">
    <location>
        <position position="144"/>
    </location>
    <ligand>
        <name>a glycoprotein</name>
        <dbReference type="ChEBI" id="CHEBI:17089"/>
    </ligand>
    <ligandPart>
        <name>poly[(1''-&gt;2')-ADP-alpha-D-ribose] group</name>
        <dbReference type="ChEBI" id="CHEBI:157741"/>
    </ligandPart>
</feature>
<feature type="binding site" evidence="1">
    <location>
        <position position="153"/>
    </location>
    <ligand>
        <name>a glycoprotein</name>
        <dbReference type="ChEBI" id="CHEBI:17089"/>
    </ligand>
    <ligandPart>
        <name>poly[(1''-&gt;2')-ADP-alpha-D-ribose] group</name>
        <dbReference type="ChEBI" id="CHEBI:157741"/>
    </ligandPart>
</feature>
<feature type="binding site" evidence="1">
    <location>
        <position position="163"/>
    </location>
    <ligand>
        <name>a glycoprotein</name>
        <dbReference type="ChEBI" id="CHEBI:17089"/>
    </ligand>
    <ligandPart>
        <name>poly[(1''-&gt;2')-ADP-alpha-D-ribose] group</name>
        <dbReference type="ChEBI" id="CHEBI:157741"/>
    </ligandPart>
</feature>
<feature type="binding site" evidence="1">
    <location>
        <position position="175"/>
    </location>
    <ligand>
        <name>a glycoprotein</name>
        <dbReference type="ChEBI" id="CHEBI:17089"/>
    </ligand>
    <ligandPart>
        <name>poly[(1''-&gt;2')-ADP-alpha-D-ribose] group</name>
        <dbReference type="ChEBI" id="CHEBI:157741"/>
    </ligandPart>
</feature>
<evidence type="ECO:0000250" key="1"/>
<evidence type="ECO:0000250" key="2">
    <source>
        <dbReference type="UniProtKB" id="Q9CZW6"/>
    </source>
</evidence>
<evidence type="ECO:0000250" key="3">
    <source>
        <dbReference type="UniProtKB" id="Q9NTX7"/>
    </source>
</evidence>
<evidence type="ECO:0000255" key="4">
    <source>
        <dbReference type="PROSITE-ProRule" id="PRU00175"/>
    </source>
</evidence>
<evidence type="ECO:0000255" key="5">
    <source>
        <dbReference type="PROSITE-ProRule" id="PRU00248"/>
    </source>
</evidence>
<evidence type="ECO:0000256" key="6">
    <source>
        <dbReference type="SAM" id="MobiDB-lite"/>
    </source>
</evidence>
<evidence type="ECO:0000305" key="7"/>
<organism>
    <name type="scientific">Xenopus tropicalis</name>
    <name type="common">Western clawed frog</name>
    <name type="synonym">Silurana tropicalis</name>
    <dbReference type="NCBI Taxonomy" id="8364"/>
    <lineage>
        <taxon>Eukaryota</taxon>
        <taxon>Metazoa</taxon>
        <taxon>Chordata</taxon>
        <taxon>Craniata</taxon>
        <taxon>Vertebrata</taxon>
        <taxon>Euteleostomi</taxon>
        <taxon>Amphibia</taxon>
        <taxon>Batrachia</taxon>
        <taxon>Anura</taxon>
        <taxon>Pipoidea</taxon>
        <taxon>Pipidae</taxon>
        <taxon>Xenopodinae</taxon>
        <taxon>Xenopus</taxon>
        <taxon>Silurana</taxon>
    </lineage>
</organism>
<accession>Q66JE4</accession>
<protein>
    <recommendedName>
        <fullName>E3 ubiquitin-protein ligase rnf146</fullName>
        <ecNumber>2.3.2.27</ecNumber>
    </recommendedName>
    <alternativeName>
        <fullName>RING finger protein 146</fullName>
    </alternativeName>
    <alternativeName>
        <fullName evidence="7">RING-type E3 ubiquitin transferase rnf146</fullName>
    </alternativeName>
</protein>
<comment type="function">
    <text evidence="2 3">E3 ubiquitin-protein ligase that specifically binds poly-ADP-ribosylated proteins and mediates their ubiquitination and subsequent degradation. May regulate many important biological processes, such as cell survival and DNA damage response. Acts as an activator of the Wnt signaling pathway by mediating the ubiquitination of poly-ADP-ribosylated proteins. Neuroprotective protein. Protects against cell death induced by DNA damaging agents and rescues cells from G1 arrest. Promotes cell survival after gamma-irradiation. Facilitates DNA repair.</text>
</comment>
<comment type="catalytic activity">
    <reaction>
        <text>S-ubiquitinyl-[E2 ubiquitin-conjugating enzyme]-L-cysteine + [acceptor protein]-L-lysine = [E2 ubiquitin-conjugating enzyme]-L-cysteine + N(6)-ubiquitinyl-[acceptor protein]-L-lysine.</text>
        <dbReference type="EC" id="2.3.2.27"/>
    </reaction>
</comment>
<comment type="pathway">
    <text>Protein modification; protein ubiquitination.</text>
</comment>
<comment type="subcellular location">
    <subcellularLocation>
        <location evidence="1">Cytoplasm</location>
        <location evidence="1">Cytosol</location>
    </subcellularLocation>
    <subcellularLocation>
        <location evidence="1">Nucleus</location>
    </subcellularLocation>
    <text evidence="1">Translocates to the nucleus after DNA damage.</text>
</comment>
<comment type="domain">
    <text evidence="1">The WWE domain mediates non-covalent poly(ADP-ribose)-binding.</text>
</comment>
<name>RN146_XENTR</name>
<sequence length="316" mass="34527">MAGCGEVSHSANMLPTNKKLVEPCPNSAPSLSVPECAICLQTCVHPVSLPCKHIFCYLCVKGASWLGRRCALCRQEIPEDFLDKPTLLSPEELKSASRGNGEYAWYYEGRNGWWQYDERTSRELEDAFTKGKKSTEMLIAGFLYVADLENMVQYRRNEHGRRRKIKRDIVDIPKKGVAGLRLECDAANVNLARESSADGADNMAALGASSSQPTPVLPTRLHTSLSTTASHALSHSDVTSSLENSFAQLQIGDPVIGRNNIGEGEEGQPLINARMPAPSALLEESEPSDSNDHGSPTLQHNSLLVPQSNRLPFGNP</sequence>
<reference key="1">
    <citation type="submission" date="2004-08" db="EMBL/GenBank/DDBJ databases">
        <authorList>
            <consortium name="NIH - Xenopus Gene Collection (XGC) project"/>
        </authorList>
    </citation>
    <scope>NUCLEOTIDE SEQUENCE [LARGE SCALE MRNA]</scope>
    <source>
        <tissue>Embryo</tissue>
    </source>
</reference>
<keyword id="KW-0963">Cytoplasm</keyword>
<keyword id="KW-0479">Metal-binding</keyword>
<keyword id="KW-0539">Nucleus</keyword>
<keyword id="KW-1185">Reference proteome</keyword>
<keyword id="KW-0808">Transferase</keyword>
<keyword id="KW-0833">Ubl conjugation pathway</keyword>
<keyword id="KW-0879">Wnt signaling pathway</keyword>
<keyword id="KW-0862">Zinc</keyword>
<keyword id="KW-0863">Zinc-finger</keyword>
<dbReference type="EC" id="2.3.2.27"/>
<dbReference type="EMBL" id="BC080946">
    <property type="protein sequence ID" value="AAH80946.1"/>
    <property type="molecule type" value="mRNA"/>
</dbReference>
<dbReference type="RefSeq" id="NP_001008060.1">
    <property type="nucleotide sequence ID" value="NM_001008059.1"/>
</dbReference>
<dbReference type="RefSeq" id="XP_017949347.1">
    <property type="nucleotide sequence ID" value="XM_018093858.1"/>
</dbReference>
<dbReference type="SMR" id="Q66JE4"/>
<dbReference type="FunCoup" id="Q66JE4">
    <property type="interactions" value="2833"/>
</dbReference>
<dbReference type="STRING" id="8364.ENSXETP00000032998"/>
<dbReference type="PaxDb" id="8364-ENSXETP00000064105"/>
<dbReference type="DNASU" id="493422"/>
<dbReference type="GeneID" id="493422"/>
<dbReference type="KEGG" id="xtr:493422"/>
<dbReference type="AGR" id="Xenbase:XB-GENE-974778"/>
<dbReference type="CTD" id="81847"/>
<dbReference type="Xenbase" id="XB-GENE-974778">
    <property type="gene designation" value="rnf146"/>
</dbReference>
<dbReference type="eggNOG" id="KOG0824">
    <property type="taxonomic scope" value="Eukaryota"/>
</dbReference>
<dbReference type="InParanoid" id="Q66JE4"/>
<dbReference type="OMA" id="GRNNIGE"/>
<dbReference type="OrthoDB" id="10065815at2759"/>
<dbReference type="PhylomeDB" id="Q66JE4"/>
<dbReference type="Reactome" id="R-XTR-8948751">
    <property type="pathway name" value="Regulation of PTEN stability and activity"/>
</dbReference>
<dbReference type="UniPathway" id="UPA00143"/>
<dbReference type="Proteomes" id="UP000008143">
    <property type="component" value="Chromosome 5"/>
</dbReference>
<dbReference type="Bgee" id="ENSXETG00000010627">
    <property type="expression patterns" value="Expressed in egg cell and 14 other cell types or tissues"/>
</dbReference>
<dbReference type="ExpressionAtlas" id="Q66JE4">
    <property type="expression patterns" value="differential"/>
</dbReference>
<dbReference type="GO" id="GO:0005829">
    <property type="term" value="C:cytosol"/>
    <property type="evidence" value="ECO:0000250"/>
    <property type="project" value="UniProtKB"/>
</dbReference>
<dbReference type="GO" id="GO:0005634">
    <property type="term" value="C:nucleus"/>
    <property type="evidence" value="ECO:0007669"/>
    <property type="project" value="UniProtKB-SubCell"/>
</dbReference>
<dbReference type="GO" id="GO:0072572">
    <property type="term" value="F:poly-ADP-D-ribose binding"/>
    <property type="evidence" value="ECO:0000250"/>
    <property type="project" value="UniProtKB"/>
</dbReference>
<dbReference type="GO" id="GO:0061630">
    <property type="term" value="F:ubiquitin protein ligase activity"/>
    <property type="evidence" value="ECO:0007669"/>
    <property type="project" value="InterPro"/>
</dbReference>
<dbReference type="GO" id="GO:0004842">
    <property type="term" value="F:ubiquitin-protein transferase activity"/>
    <property type="evidence" value="ECO:0000250"/>
    <property type="project" value="UniProtKB"/>
</dbReference>
<dbReference type="GO" id="GO:0008270">
    <property type="term" value="F:zinc ion binding"/>
    <property type="evidence" value="ECO:0007669"/>
    <property type="project" value="UniProtKB-KW"/>
</dbReference>
<dbReference type="GO" id="GO:0090263">
    <property type="term" value="P:positive regulation of canonical Wnt signaling pathway"/>
    <property type="evidence" value="ECO:0000250"/>
    <property type="project" value="UniProtKB"/>
</dbReference>
<dbReference type="GO" id="GO:0051865">
    <property type="term" value="P:protein autoubiquitination"/>
    <property type="evidence" value="ECO:0000250"/>
    <property type="project" value="UniProtKB"/>
</dbReference>
<dbReference type="GO" id="GO:0070936">
    <property type="term" value="P:protein K48-linked ubiquitination"/>
    <property type="evidence" value="ECO:0000250"/>
    <property type="project" value="UniProtKB"/>
</dbReference>
<dbReference type="GO" id="GO:0006511">
    <property type="term" value="P:ubiquitin-dependent protein catabolic process"/>
    <property type="evidence" value="ECO:0000250"/>
    <property type="project" value="UniProtKB"/>
</dbReference>
<dbReference type="GO" id="GO:0016055">
    <property type="term" value="P:Wnt signaling pathway"/>
    <property type="evidence" value="ECO:0007669"/>
    <property type="project" value="UniProtKB-KW"/>
</dbReference>
<dbReference type="CDD" id="cd16546">
    <property type="entry name" value="RING-HC_RNF146"/>
    <property type="match status" value="1"/>
</dbReference>
<dbReference type="FunFam" id="3.30.40.10:FF:000204">
    <property type="entry name" value="E3 ubiquitin-protein ligase RNF146"/>
    <property type="match status" value="1"/>
</dbReference>
<dbReference type="FunFam" id="3.30.720.50:FF:000003">
    <property type="entry name" value="E3 ubiquitin-protein ligase RNF146"/>
    <property type="match status" value="1"/>
</dbReference>
<dbReference type="Gene3D" id="3.30.720.50">
    <property type="match status" value="1"/>
</dbReference>
<dbReference type="Gene3D" id="3.30.40.10">
    <property type="entry name" value="Zinc/RING finger domain, C3HC4 (zinc finger)"/>
    <property type="match status" value="1"/>
</dbReference>
<dbReference type="InterPro" id="IPR044110">
    <property type="entry name" value="RING-HC_RNF146"/>
</dbReference>
<dbReference type="InterPro" id="IPR033509">
    <property type="entry name" value="RNF146"/>
</dbReference>
<dbReference type="InterPro" id="IPR018123">
    <property type="entry name" value="WWE-dom_subgr"/>
</dbReference>
<dbReference type="InterPro" id="IPR004170">
    <property type="entry name" value="WWE_dom"/>
</dbReference>
<dbReference type="InterPro" id="IPR037197">
    <property type="entry name" value="WWE_dom_sf"/>
</dbReference>
<dbReference type="InterPro" id="IPR001841">
    <property type="entry name" value="Znf_RING"/>
</dbReference>
<dbReference type="InterPro" id="IPR013083">
    <property type="entry name" value="Znf_RING/FYVE/PHD"/>
</dbReference>
<dbReference type="InterPro" id="IPR017907">
    <property type="entry name" value="Znf_RING_CS"/>
</dbReference>
<dbReference type="PANTHER" id="PTHR13417">
    <property type="entry name" value="E3 UBIQUITIN-PROTEIN LIGASE RNF146"/>
    <property type="match status" value="1"/>
</dbReference>
<dbReference type="PANTHER" id="PTHR13417:SF2">
    <property type="entry name" value="E3 UBIQUITIN-PROTEIN LIGASE RNF146"/>
    <property type="match status" value="1"/>
</dbReference>
<dbReference type="Pfam" id="PF02825">
    <property type="entry name" value="WWE"/>
    <property type="match status" value="1"/>
</dbReference>
<dbReference type="Pfam" id="PF13920">
    <property type="entry name" value="zf-C3HC4_3"/>
    <property type="match status" value="1"/>
</dbReference>
<dbReference type="SMART" id="SM00184">
    <property type="entry name" value="RING"/>
    <property type="match status" value="1"/>
</dbReference>
<dbReference type="SMART" id="SM00678">
    <property type="entry name" value="WWE"/>
    <property type="match status" value="1"/>
</dbReference>
<dbReference type="SUPFAM" id="SSF57850">
    <property type="entry name" value="RING/U-box"/>
    <property type="match status" value="1"/>
</dbReference>
<dbReference type="SUPFAM" id="SSF117839">
    <property type="entry name" value="WWE domain"/>
    <property type="match status" value="1"/>
</dbReference>
<dbReference type="PROSITE" id="PS50918">
    <property type="entry name" value="WWE"/>
    <property type="match status" value="1"/>
</dbReference>
<dbReference type="PROSITE" id="PS00518">
    <property type="entry name" value="ZF_RING_1"/>
    <property type="match status" value="1"/>
</dbReference>
<dbReference type="PROSITE" id="PS50089">
    <property type="entry name" value="ZF_RING_2"/>
    <property type="match status" value="1"/>
</dbReference>